<sequence length="305" mass="34299">MSKRDILSVLDMEKDLSEIIDLSIELKKNRYRSYESLRNKVLGLIFEKPSTRTRTSLEVAIDQLGGHAVYLNPSEMQLGRGETISDTGHVLSRFLDAIAYRAYDHRNVVELARSTSIPVINALDDVEHPLQIVADFMTIKEKKGRFTNLKFSYIGDGNNMANSLMLGAAILGTDMYVASPKGFEPKQEFVEKARSIAKQHGSSITITNDPVEAARDADVIYTDVWISMGEESKKGEKEKAFKDFQINEKLVSNAKRDYIFMHCLPAHRGLEVTDGVADSINSVIFDEAENRLHSEKGVLYKLLSY</sequence>
<reference key="1">
    <citation type="journal article" date="2000" name="Nature">
        <title>The genome sequence of the thermoacidophilic scavenger Thermoplasma acidophilum.</title>
        <authorList>
            <person name="Ruepp A."/>
            <person name="Graml W."/>
            <person name="Santos-Martinez M.-L."/>
            <person name="Koretke K.K."/>
            <person name="Volker C."/>
            <person name="Mewes H.-W."/>
            <person name="Frishman D."/>
            <person name="Stocker S."/>
            <person name="Lupas A.N."/>
            <person name="Baumeister W."/>
        </authorList>
    </citation>
    <scope>NUCLEOTIDE SEQUENCE [LARGE SCALE GENOMIC DNA]</scope>
    <source>
        <strain>ATCC 25905 / DSM 1728 / JCM 9062 / NBRC 15155 / AMRC-C165</strain>
    </source>
</reference>
<feature type="chain" id="PRO_0000113079" description="Ornithine carbamoyltransferase, catabolic">
    <location>
        <begin position="1"/>
        <end position="305"/>
    </location>
</feature>
<feature type="binding site" evidence="2">
    <location>
        <begin position="50"/>
        <end position="53"/>
    </location>
    <ligand>
        <name>carbamoyl phosphate</name>
        <dbReference type="ChEBI" id="CHEBI:58228"/>
    </ligand>
</feature>
<feature type="binding site" evidence="2">
    <location>
        <position position="77"/>
    </location>
    <ligand>
        <name>carbamoyl phosphate</name>
        <dbReference type="ChEBI" id="CHEBI:58228"/>
    </ligand>
</feature>
<feature type="binding site" evidence="2">
    <location>
        <position position="101"/>
    </location>
    <ligand>
        <name>carbamoyl phosphate</name>
        <dbReference type="ChEBI" id="CHEBI:58228"/>
    </ligand>
</feature>
<feature type="binding site" evidence="2">
    <location>
        <begin position="128"/>
        <end position="131"/>
    </location>
    <ligand>
        <name>carbamoyl phosphate</name>
        <dbReference type="ChEBI" id="CHEBI:58228"/>
    </ligand>
</feature>
<feature type="binding site" evidence="2">
    <location>
        <position position="159"/>
    </location>
    <ligand>
        <name>L-ornithine</name>
        <dbReference type="ChEBI" id="CHEBI:46911"/>
    </ligand>
</feature>
<feature type="binding site" evidence="2">
    <location>
        <position position="223"/>
    </location>
    <ligand>
        <name>L-ornithine</name>
        <dbReference type="ChEBI" id="CHEBI:46911"/>
    </ligand>
</feature>
<feature type="binding site" evidence="2">
    <location>
        <begin position="227"/>
        <end position="228"/>
    </location>
    <ligand>
        <name>L-ornithine</name>
        <dbReference type="ChEBI" id="CHEBI:46911"/>
    </ligand>
</feature>
<feature type="binding site" evidence="2">
    <location>
        <begin position="263"/>
        <end position="264"/>
    </location>
    <ligand>
        <name>carbamoyl phosphate</name>
        <dbReference type="ChEBI" id="CHEBI:58228"/>
    </ligand>
</feature>
<feature type="binding site" evidence="2">
    <location>
        <position position="291"/>
    </location>
    <ligand>
        <name>carbamoyl phosphate</name>
        <dbReference type="ChEBI" id="CHEBI:58228"/>
    </ligand>
</feature>
<name>OTCC_THEAC</name>
<proteinExistence type="inferred from homology"/>
<comment type="function">
    <text evidence="1">Reversibly catalyzes the transfer of the carbamoyl group from carbamoyl phosphate (CP) to the N(epsilon) atom of ornithine (ORN) to produce L-citrulline.</text>
</comment>
<comment type="catalytic activity">
    <reaction evidence="2">
        <text>carbamoyl phosphate + L-ornithine = L-citrulline + phosphate + H(+)</text>
        <dbReference type="Rhea" id="RHEA:19513"/>
        <dbReference type="ChEBI" id="CHEBI:15378"/>
        <dbReference type="ChEBI" id="CHEBI:43474"/>
        <dbReference type="ChEBI" id="CHEBI:46911"/>
        <dbReference type="ChEBI" id="CHEBI:57743"/>
        <dbReference type="ChEBI" id="CHEBI:58228"/>
        <dbReference type="EC" id="2.1.3.3"/>
    </reaction>
</comment>
<comment type="pathway">
    <text evidence="2">Amino-acid degradation; L-arginine degradation via ADI pathway; carbamoyl phosphate from L-arginine: step 2/2.</text>
</comment>
<comment type="subcellular location">
    <subcellularLocation>
        <location evidence="2">Cytoplasm</location>
    </subcellularLocation>
</comment>
<comment type="similarity">
    <text evidence="2">Belongs to the aspartate/ornithine carbamoyltransferase superfamily. OTCase family.</text>
</comment>
<comment type="sequence caution" evidence="3">
    <conflict type="erroneous initiation">
        <sequence resource="EMBL-CDS" id="CAC12451"/>
    </conflict>
</comment>
<accession>Q9HIK9</accession>
<evidence type="ECO:0000250" key="1"/>
<evidence type="ECO:0000255" key="2">
    <source>
        <dbReference type="HAMAP-Rule" id="MF_01109"/>
    </source>
</evidence>
<evidence type="ECO:0000305" key="3"/>
<organism>
    <name type="scientific">Thermoplasma acidophilum (strain ATCC 25905 / DSM 1728 / JCM 9062 / NBRC 15155 / AMRC-C165)</name>
    <dbReference type="NCBI Taxonomy" id="273075"/>
    <lineage>
        <taxon>Archaea</taxon>
        <taxon>Methanobacteriati</taxon>
        <taxon>Thermoplasmatota</taxon>
        <taxon>Thermoplasmata</taxon>
        <taxon>Thermoplasmatales</taxon>
        <taxon>Thermoplasmataceae</taxon>
        <taxon>Thermoplasma</taxon>
    </lineage>
</organism>
<gene>
    <name evidence="2" type="primary">arcB</name>
    <name type="ordered locus">Ta1330</name>
</gene>
<dbReference type="EC" id="2.1.3.3" evidence="2"/>
<dbReference type="EMBL" id="AL445067">
    <property type="protein sequence ID" value="CAC12451.1"/>
    <property type="status" value="ALT_INIT"/>
    <property type="molecule type" value="Genomic_DNA"/>
</dbReference>
<dbReference type="RefSeq" id="WP_048162084.1">
    <property type="nucleotide sequence ID" value="NC_002578.1"/>
</dbReference>
<dbReference type="SMR" id="Q9HIK9"/>
<dbReference type="FunCoup" id="Q9HIK9">
    <property type="interactions" value="166"/>
</dbReference>
<dbReference type="STRING" id="273075.gene:9572553"/>
<dbReference type="PaxDb" id="273075-Ta1330"/>
<dbReference type="EnsemblBacteria" id="CAC12451">
    <property type="protein sequence ID" value="CAC12451"/>
    <property type="gene ID" value="CAC12451"/>
</dbReference>
<dbReference type="KEGG" id="tac:Ta1330"/>
<dbReference type="eggNOG" id="arCOG00912">
    <property type="taxonomic scope" value="Archaea"/>
</dbReference>
<dbReference type="HOGENOM" id="CLU_043846_3_2_2"/>
<dbReference type="InParanoid" id="Q9HIK9"/>
<dbReference type="OrthoDB" id="4696at2157"/>
<dbReference type="UniPathway" id="UPA00254">
    <property type="reaction ID" value="UER00365"/>
</dbReference>
<dbReference type="Proteomes" id="UP000001024">
    <property type="component" value="Chromosome"/>
</dbReference>
<dbReference type="GO" id="GO:0005737">
    <property type="term" value="C:cytoplasm"/>
    <property type="evidence" value="ECO:0007669"/>
    <property type="project" value="UniProtKB-SubCell"/>
</dbReference>
<dbReference type="GO" id="GO:0016597">
    <property type="term" value="F:amino acid binding"/>
    <property type="evidence" value="ECO:0007669"/>
    <property type="project" value="InterPro"/>
</dbReference>
<dbReference type="GO" id="GO:0004585">
    <property type="term" value="F:ornithine carbamoyltransferase activity"/>
    <property type="evidence" value="ECO:0007669"/>
    <property type="project" value="UniProtKB-UniRule"/>
</dbReference>
<dbReference type="GO" id="GO:0042450">
    <property type="term" value="P:arginine biosynthetic process via ornithine"/>
    <property type="evidence" value="ECO:0007669"/>
    <property type="project" value="TreeGrafter"/>
</dbReference>
<dbReference type="GO" id="GO:0019547">
    <property type="term" value="P:arginine catabolic process to ornithine"/>
    <property type="evidence" value="ECO:0007669"/>
    <property type="project" value="UniProtKB-UniRule"/>
</dbReference>
<dbReference type="GO" id="GO:0019240">
    <property type="term" value="P:citrulline biosynthetic process"/>
    <property type="evidence" value="ECO:0007669"/>
    <property type="project" value="TreeGrafter"/>
</dbReference>
<dbReference type="FunFam" id="3.40.50.1370:FF:000008">
    <property type="entry name" value="Ornithine carbamoyltransferase"/>
    <property type="match status" value="1"/>
</dbReference>
<dbReference type="Gene3D" id="3.40.50.1370">
    <property type="entry name" value="Aspartate/ornithine carbamoyltransferase"/>
    <property type="match status" value="2"/>
</dbReference>
<dbReference type="HAMAP" id="MF_01109">
    <property type="entry name" value="OTCase"/>
    <property type="match status" value="1"/>
</dbReference>
<dbReference type="InterPro" id="IPR006132">
    <property type="entry name" value="Asp/Orn_carbamoyltranf_P-bd"/>
</dbReference>
<dbReference type="InterPro" id="IPR006130">
    <property type="entry name" value="Asp/Orn_carbamoylTrfase"/>
</dbReference>
<dbReference type="InterPro" id="IPR036901">
    <property type="entry name" value="Asp/Orn_carbamoylTrfase_sf"/>
</dbReference>
<dbReference type="InterPro" id="IPR006131">
    <property type="entry name" value="Asp_carbamoyltransf_Asp/Orn-bd"/>
</dbReference>
<dbReference type="InterPro" id="IPR002292">
    <property type="entry name" value="Orn/put_carbamltrans"/>
</dbReference>
<dbReference type="InterPro" id="IPR024904">
    <property type="entry name" value="OTCase_ArgI"/>
</dbReference>
<dbReference type="NCBIfam" id="TIGR00658">
    <property type="entry name" value="orni_carb_tr"/>
    <property type="match status" value="1"/>
</dbReference>
<dbReference type="NCBIfam" id="NF001986">
    <property type="entry name" value="PRK00779.1"/>
    <property type="match status" value="1"/>
</dbReference>
<dbReference type="PANTHER" id="PTHR45753">
    <property type="entry name" value="ORNITHINE CARBAMOYLTRANSFERASE, MITOCHONDRIAL"/>
    <property type="match status" value="1"/>
</dbReference>
<dbReference type="PANTHER" id="PTHR45753:SF3">
    <property type="entry name" value="ORNITHINE TRANSCARBAMYLASE, MITOCHONDRIAL"/>
    <property type="match status" value="1"/>
</dbReference>
<dbReference type="Pfam" id="PF00185">
    <property type="entry name" value="OTCace"/>
    <property type="match status" value="1"/>
</dbReference>
<dbReference type="Pfam" id="PF02729">
    <property type="entry name" value="OTCace_N"/>
    <property type="match status" value="1"/>
</dbReference>
<dbReference type="PRINTS" id="PR00100">
    <property type="entry name" value="AOTCASE"/>
</dbReference>
<dbReference type="PRINTS" id="PR00102">
    <property type="entry name" value="OTCASE"/>
</dbReference>
<dbReference type="SUPFAM" id="SSF53671">
    <property type="entry name" value="Aspartate/ornithine carbamoyltransferase"/>
    <property type="match status" value="1"/>
</dbReference>
<dbReference type="PROSITE" id="PS00097">
    <property type="entry name" value="CARBAMOYLTRANSFERASE"/>
    <property type="match status" value="1"/>
</dbReference>
<protein>
    <recommendedName>
        <fullName evidence="2">Ornithine carbamoyltransferase, catabolic</fullName>
        <shortName evidence="2">OTCase</shortName>
        <ecNumber evidence="2">2.1.3.3</ecNumber>
    </recommendedName>
</protein>
<keyword id="KW-0056">Arginine metabolism</keyword>
<keyword id="KW-0963">Cytoplasm</keyword>
<keyword id="KW-1185">Reference proteome</keyword>
<keyword id="KW-0808">Transferase</keyword>